<keyword id="KW-1185">Reference proteome</keyword>
<keyword id="KW-0687">Ribonucleoprotein</keyword>
<keyword id="KW-0689">Ribosomal protein</keyword>
<keyword id="KW-0694">RNA-binding</keyword>
<keyword id="KW-0699">rRNA-binding</keyword>
<gene>
    <name evidence="1" type="primary">rplJ</name>
    <name type="ordered locus">Adeh_1590</name>
</gene>
<proteinExistence type="inferred from homology"/>
<dbReference type="EMBL" id="CP000251">
    <property type="protein sequence ID" value="ABC81363.1"/>
    <property type="molecule type" value="Genomic_DNA"/>
</dbReference>
<dbReference type="RefSeq" id="WP_011420646.1">
    <property type="nucleotide sequence ID" value="NC_007760.1"/>
</dbReference>
<dbReference type="SMR" id="Q2II80"/>
<dbReference type="STRING" id="290397.Adeh_1590"/>
<dbReference type="KEGG" id="ade:Adeh_1590"/>
<dbReference type="eggNOG" id="COG0244">
    <property type="taxonomic scope" value="Bacteria"/>
</dbReference>
<dbReference type="HOGENOM" id="CLU_092227_0_0_7"/>
<dbReference type="OrthoDB" id="3186107at2"/>
<dbReference type="Proteomes" id="UP000001935">
    <property type="component" value="Chromosome"/>
</dbReference>
<dbReference type="GO" id="GO:1990904">
    <property type="term" value="C:ribonucleoprotein complex"/>
    <property type="evidence" value="ECO:0007669"/>
    <property type="project" value="UniProtKB-KW"/>
</dbReference>
<dbReference type="GO" id="GO:0005840">
    <property type="term" value="C:ribosome"/>
    <property type="evidence" value="ECO:0007669"/>
    <property type="project" value="UniProtKB-KW"/>
</dbReference>
<dbReference type="GO" id="GO:0070180">
    <property type="term" value="F:large ribosomal subunit rRNA binding"/>
    <property type="evidence" value="ECO:0007669"/>
    <property type="project" value="UniProtKB-UniRule"/>
</dbReference>
<dbReference type="GO" id="GO:0006412">
    <property type="term" value="P:translation"/>
    <property type="evidence" value="ECO:0007669"/>
    <property type="project" value="UniProtKB-UniRule"/>
</dbReference>
<dbReference type="CDD" id="cd05797">
    <property type="entry name" value="Ribosomal_L10"/>
    <property type="match status" value="1"/>
</dbReference>
<dbReference type="Gene3D" id="3.30.70.1730">
    <property type="match status" value="1"/>
</dbReference>
<dbReference type="HAMAP" id="MF_00362">
    <property type="entry name" value="Ribosomal_uL10"/>
    <property type="match status" value="1"/>
</dbReference>
<dbReference type="InterPro" id="IPR001790">
    <property type="entry name" value="Ribosomal_uL10"/>
</dbReference>
<dbReference type="InterPro" id="IPR043141">
    <property type="entry name" value="Ribosomal_uL10-like_sf"/>
</dbReference>
<dbReference type="InterPro" id="IPR022973">
    <property type="entry name" value="Ribosomal_uL10_bac"/>
</dbReference>
<dbReference type="InterPro" id="IPR047865">
    <property type="entry name" value="Ribosomal_uL10_bac_type"/>
</dbReference>
<dbReference type="NCBIfam" id="NF000955">
    <property type="entry name" value="PRK00099.1-1"/>
    <property type="match status" value="1"/>
</dbReference>
<dbReference type="PANTHER" id="PTHR11560">
    <property type="entry name" value="39S RIBOSOMAL PROTEIN L10, MITOCHONDRIAL"/>
    <property type="match status" value="1"/>
</dbReference>
<dbReference type="Pfam" id="PF00466">
    <property type="entry name" value="Ribosomal_L10"/>
    <property type="match status" value="1"/>
</dbReference>
<dbReference type="SUPFAM" id="SSF160369">
    <property type="entry name" value="Ribosomal protein L10-like"/>
    <property type="match status" value="1"/>
</dbReference>
<feature type="chain" id="PRO_0000234832" description="Large ribosomal subunit protein uL10">
    <location>
        <begin position="1"/>
        <end position="174"/>
    </location>
</feature>
<comment type="function">
    <text evidence="1">Forms part of the ribosomal stalk, playing a central role in the interaction of the ribosome with GTP-bound translation factors.</text>
</comment>
<comment type="subunit">
    <text evidence="1">Part of the ribosomal stalk of the 50S ribosomal subunit. The N-terminus interacts with L11 and the large rRNA to form the base of the stalk. The C-terminus forms an elongated spine to which L12 dimers bind in a sequential fashion forming a multimeric L10(L12)X complex.</text>
</comment>
<comment type="similarity">
    <text evidence="1">Belongs to the universal ribosomal protein uL10 family.</text>
</comment>
<accession>Q2II80</accession>
<name>RL10_ANADE</name>
<sequence length="174" mass="18854">MNRTEKEQVIGELHEKMAKAKAAIVAEPKGLNVAVVTDLRKKLRDAKIDYRIVKNTLAARAAKGTPVEPVADRFVGPTALVMSYDDVVTPAKLLADFMKDRENFVIRTAIIEGKVVDAKGVQALAKLPGLKELRGQIAAMIAQPATKLARLVGTPGQQLARVVGARHEQLEKQG</sequence>
<organism>
    <name type="scientific">Anaeromyxobacter dehalogenans (strain 2CP-C)</name>
    <dbReference type="NCBI Taxonomy" id="290397"/>
    <lineage>
        <taxon>Bacteria</taxon>
        <taxon>Pseudomonadati</taxon>
        <taxon>Myxococcota</taxon>
        <taxon>Myxococcia</taxon>
        <taxon>Myxococcales</taxon>
        <taxon>Cystobacterineae</taxon>
        <taxon>Anaeromyxobacteraceae</taxon>
        <taxon>Anaeromyxobacter</taxon>
    </lineage>
</organism>
<protein>
    <recommendedName>
        <fullName evidence="1">Large ribosomal subunit protein uL10</fullName>
    </recommendedName>
    <alternativeName>
        <fullName evidence="2">50S ribosomal protein L10</fullName>
    </alternativeName>
</protein>
<evidence type="ECO:0000255" key="1">
    <source>
        <dbReference type="HAMAP-Rule" id="MF_00362"/>
    </source>
</evidence>
<evidence type="ECO:0000305" key="2"/>
<reference key="1">
    <citation type="submission" date="2006-01" db="EMBL/GenBank/DDBJ databases">
        <title>Complete sequence of Anaeromyxobacter dehalogenans 2CP-C.</title>
        <authorList>
            <person name="Copeland A."/>
            <person name="Lucas S."/>
            <person name="Lapidus A."/>
            <person name="Barry K."/>
            <person name="Detter J.C."/>
            <person name="Glavina T."/>
            <person name="Hammon N."/>
            <person name="Israni S."/>
            <person name="Pitluck S."/>
            <person name="Brettin T."/>
            <person name="Bruce D."/>
            <person name="Han C."/>
            <person name="Tapia R."/>
            <person name="Gilna P."/>
            <person name="Kiss H."/>
            <person name="Schmutz J."/>
            <person name="Larimer F."/>
            <person name="Land M."/>
            <person name="Kyrpides N."/>
            <person name="Anderson I."/>
            <person name="Sanford R.A."/>
            <person name="Ritalahti K.M."/>
            <person name="Thomas H.S."/>
            <person name="Kirby J.R."/>
            <person name="Zhulin I.B."/>
            <person name="Loeffler F.E."/>
            <person name="Richardson P."/>
        </authorList>
    </citation>
    <scope>NUCLEOTIDE SEQUENCE [LARGE SCALE GENOMIC DNA]</scope>
    <source>
        <strain>2CP-C</strain>
    </source>
</reference>